<proteinExistence type="inferred from homology"/>
<protein>
    <recommendedName>
        <fullName>Flagellar protein FliT</fullName>
    </recommendedName>
</protein>
<dbReference type="EMBL" id="CP000557">
    <property type="protein sequence ID" value="ABO68397.1"/>
    <property type="molecule type" value="Genomic_DNA"/>
</dbReference>
<dbReference type="RefSeq" id="WP_011888198.1">
    <property type="nucleotide sequence ID" value="NC_009328.1"/>
</dbReference>
<dbReference type="SMR" id="A4ISU3"/>
<dbReference type="GeneID" id="87622800"/>
<dbReference type="KEGG" id="gtn:GTNG_3052"/>
<dbReference type="eggNOG" id="ENOG50330XF">
    <property type="taxonomic scope" value="Bacteria"/>
</dbReference>
<dbReference type="HOGENOM" id="CLU_165941_1_0_9"/>
<dbReference type="Proteomes" id="UP000001578">
    <property type="component" value="Chromosome"/>
</dbReference>
<dbReference type="GO" id="GO:0005829">
    <property type="term" value="C:cytosol"/>
    <property type="evidence" value="ECO:0007669"/>
    <property type="project" value="UniProtKB-SubCell"/>
</dbReference>
<dbReference type="GO" id="GO:0044781">
    <property type="term" value="P:bacterial-type flagellum organization"/>
    <property type="evidence" value="ECO:0007669"/>
    <property type="project" value="UniProtKB-KW"/>
</dbReference>
<gene>
    <name type="primary">fliT</name>
    <name type="ordered locus">GTNG_3052</name>
</gene>
<evidence type="ECO:0000250" key="1"/>
<evidence type="ECO:0000255" key="2"/>
<evidence type="ECO:0000305" key="3"/>
<name>FLIT_GEOTN</name>
<organism>
    <name type="scientific">Geobacillus thermodenitrificans (strain NG80-2)</name>
    <dbReference type="NCBI Taxonomy" id="420246"/>
    <lineage>
        <taxon>Bacteria</taxon>
        <taxon>Bacillati</taxon>
        <taxon>Bacillota</taxon>
        <taxon>Bacilli</taxon>
        <taxon>Bacillales</taxon>
        <taxon>Anoxybacillaceae</taxon>
        <taxon>Geobacillus</taxon>
    </lineage>
</organism>
<reference key="1">
    <citation type="journal article" date="2007" name="Proc. Natl. Acad. Sci. U.S.A.">
        <title>Genome and proteome of long-chain alkane degrading Geobacillus thermodenitrificans NG80-2 isolated from a deep-subsurface oil reservoir.</title>
        <authorList>
            <person name="Feng L."/>
            <person name="Wang W."/>
            <person name="Cheng J."/>
            <person name="Ren Y."/>
            <person name="Zhao G."/>
            <person name="Gao C."/>
            <person name="Tang Y."/>
            <person name="Liu X."/>
            <person name="Han W."/>
            <person name="Peng X."/>
            <person name="Liu R."/>
            <person name="Wang L."/>
        </authorList>
    </citation>
    <scope>NUCLEOTIDE SEQUENCE [LARGE SCALE GENOMIC DNA]</scope>
    <source>
        <strain>NG80-2</strain>
    </source>
</reference>
<comment type="function">
    <text evidence="1">May act as an export chaperone for the filament capping protein FliD.</text>
</comment>
<comment type="subunit">
    <text evidence="1">Homodimer.</text>
</comment>
<comment type="subcellular location">
    <subcellularLocation>
        <location evidence="1">Cytoplasm</location>
        <location evidence="1">Cytosol</location>
    </subcellularLocation>
</comment>
<comment type="similarity">
    <text evidence="3">Belongs to the bacillales FliT family.</text>
</comment>
<sequence>MGVVHDVWVVTKQLLEATALPWPAEERETWLSQVDELLRRRERLLHKLRPPYSEEEQRLGREIVAWNQEIEARLRQVRDEIRDDLRMAGAKRQANAHYVHPYEQPLSFDGMFYDKRR</sequence>
<keyword id="KW-1005">Bacterial flagellum biogenesis</keyword>
<keyword id="KW-0143">Chaperone</keyword>
<keyword id="KW-0175">Coiled coil</keyword>
<keyword id="KW-0963">Cytoplasm</keyword>
<accession>A4ISU3</accession>
<feature type="chain" id="PRO_0000353910" description="Flagellar protein FliT">
    <location>
        <begin position="1"/>
        <end position="117"/>
    </location>
</feature>
<feature type="coiled-coil region" evidence="2">
    <location>
        <begin position="24"/>
        <end position="88"/>
    </location>
</feature>